<reference key="1">
    <citation type="journal article" date="2007" name="PLoS ONE">
        <title>Paradoxical DNA repair and peroxide resistance gene conservation in Bacillus pumilus SAFR-032.</title>
        <authorList>
            <person name="Gioia J."/>
            <person name="Yerrapragada S."/>
            <person name="Qin X."/>
            <person name="Jiang H."/>
            <person name="Igboeli O.C."/>
            <person name="Muzny D."/>
            <person name="Dugan-Rocha S."/>
            <person name="Ding Y."/>
            <person name="Hawes A."/>
            <person name="Liu W."/>
            <person name="Perez L."/>
            <person name="Kovar C."/>
            <person name="Dinh H."/>
            <person name="Lee S."/>
            <person name="Nazareth L."/>
            <person name="Blyth P."/>
            <person name="Holder M."/>
            <person name="Buhay C."/>
            <person name="Tirumalai M.R."/>
            <person name="Liu Y."/>
            <person name="Dasgupta I."/>
            <person name="Bokhetache L."/>
            <person name="Fujita M."/>
            <person name="Karouia F."/>
            <person name="Eswara Moorthy P."/>
            <person name="Siefert J."/>
            <person name="Uzman A."/>
            <person name="Buzumbo P."/>
            <person name="Verma A."/>
            <person name="Zwiya H."/>
            <person name="McWilliams B.D."/>
            <person name="Olowu A."/>
            <person name="Clinkenbeard K.D."/>
            <person name="Newcombe D."/>
            <person name="Golebiewski L."/>
            <person name="Petrosino J.F."/>
            <person name="Nicholson W.L."/>
            <person name="Fox G.E."/>
            <person name="Venkateswaran K."/>
            <person name="Highlander S.K."/>
            <person name="Weinstock G.M."/>
        </authorList>
    </citation>
    <scope>NUCLEOTIDE SEQUENCE [LARGE SCALE GENOMIC DNA]</scope>
    <source>
        <strain>SAFR-032</strain>
    </source>
</reference>
<organism>
    <name type="scientific">Bacillus pumilus (strain SAFR-032)</name>
    <dbReference type="NCBI Taxonomy" id="315750"/>
    <lineage>
        <taxon>Bacteria</taxon>
        <taxon>Bacillati</taxon>
        <taxon>Bacillota</taxon>
        <taxon>Bacilli</taxon>
        <taxon>Bacillales</taxon>
        <taxon>Bacillaceae</taxon>
        <taxon>Bacillus</taxon>
    </lineage>
</organism>
<name>SYR_BACP2</name>
<comment type="catalytic activity">
    <reaction evidence="1">
        <text>tRNA(Arg) + L-arginine + ATP = L-arginyl-tRNA(Arg) + AMP + diphosphate</text>
        <dbReference type="Rhea" id="RHEA:20301"/>
        <dbReference type="Rhea" id="RHEA-COMP:9658"/>
        <dbReference type="Rhea" id="RHEA-COMP:9673"/>
        <dbReference type="ChEBI" id="CHEBI:30616"/>
        <dbReference type="ChEBI" id="CHEBI:32682"/>
        <dbReference type="ChEBI" id="CHEBI:33019"/>
        <dbReference type="ChEBI" id="CHEBI:78442"/>
        <dbReference type="ChEBI" id="CHEBI:78513"/>
        <dbReference type="ChEBI" id="CHEBI:456215"/>
        <dbReference type="EC" id="6.1.1.19"/>
    </reaction>
</comment>
<comment type="subunit">
    <text evidence="1">Monomer.</text>
</comment>
<comment type="subcellular location">
    <subcellularLocation>
        <location evidence="1">Cytoplasm</location>
    </subcellularLocation>
</comment>
<comment type="similarity">
    <text evidence="1">Belongs to the class-I aminoacyl-tRNA synthetase family.</text>
</comment>
<evidence type="ECO:0000255" key="1">
    <source>
        <dbReference type="HAMAP-Rule" id="MF_00123"/>
    </source>
</evidence>
<protein>
    <recommendedName>
        <fullName evidence="1">Arginine--tRNA ligase</fullName>
        <ecNumber evidence="1">6.1.1.19</ecNumber>
    </recommendedName>
    <alternativeName>
        <fullName evidence="1">Arginyl-tRNA synthetase</fullName>
        <shortName evidence="1">ArgRS</shortName>
    </alternativeName>
</protein>
<accession>A8FIG8</accession>
<keyword id="KW-0030">Aminoacyl-tRNA synthetase</keyword>
<keyword id="KW-0067">ATP-binding</keyword>
<keyword id="KW-0963">Cytoplasm</keyword>
<keyword id="KW-0436">Ligase</keyword>
<keyword id="KW-0547">Nucleotide-binding</keyword>
<keyword id="KW-0648">Protein biosynthesis</keyword>
<sequence>MNIAEQVKDALKEEIIAAVVKAGLADESQVPDVLLEVPKDKTHGDYSTNMAMQLARIAKKAPRQIAEDIVKAFDKGKASIEKMDIAGPGFINFYMNNQYLTKLIPAVLEAKEAYGETNTGGGQKVQVEFVSANPTGDLHLGHARGAAVGDSLCNILDKAGFDVSREYYINDAGNQINNLALSVEVRYFEALGLEKEMPEDGYRGEDIKGIGQKLADEFGDRFVHESEEERMKFFREYGLKYELEKLRVDLENFRVPFDVWYSETSLYENGKIEPALETLREKGYVFEEDGATWLRSTDFGDDKDRVLIKKDGSFTYLLPDIAYHKDKLDRGFDQLINIWGADHHGYIPRMKAAIQALGYPAGKLEVEIIQLVHLYKNGEKMKMSKRTGKAVTMRDLIEEVGLDATRYFFAMRSAATHMDFDLDLAISTSNENPVYYAQYAHARICSMLRQGEEKGYEPNLEKADFSHIQSEKEYDLLKIIGGFPEVVAEAAEKRIPHRVTNYIYDLASALHSFYNAEKVIDVENETKTTARLSLMKATQITLANALKLIGVSAPEKM</sequence>
<feature type="chain" id="PRO_1000057807" description="Arginine--tRNA ligase">
    <location>
        <begin position="1"/>
        <end position="557"/>
    </location>
</feature>
<feature type="short sequence motif" description="'HIGH' region">
    <location>
        <begin position="132"/>
        <end position="142"/>
    </location>
</feature>
<proteinExistence type="inferred from homology"/>
<gene>
    <name evidence="1" type="primary">argS</name>
    <name type="ordered locus">BPUM_3383</name>
</gene>
<dbReference type="EC" id="6.1.1.19" evidence="1"/>
<dbReference type="EMBL" id="CP000813">
    <property type="protein sequence ID" value="ABV64035.1"/>
    <property type="molecule type" value="Genomic_DNA"/>
</dbReference>
<dbReference type="RefSeq" id="WP_012011593.1">
    <property type="nucleotide sequence ID" value="NC_009848.4"/>
</dbReference>
<dbReference type="SMR" id="A8FIG8"/>
<dbReference type="STRING" id="315750.BPUM_3383"/>
<dbReference type="GeneID" id="5622673"/>
<dbReference type="KEGG" id="bpu:BPUM_3383"/>
<dbReference type="eggNOG" id="COG0018">
    <property type="taxonomic scope" value="Bacteria"/>
</dbReference>
<dbReference type="HOGENOM" id="CLU_006406_0_1_9"/>
<dbReference type="OrthoDB" id="9805987at2"/>
<dbReference type="Proteomes" id="UP000001355">
    <property type="component" value="Chromosome"/>
</dbReference>
<dbReference type="GO" id="GO:0005737">
    <property type="term" value="C:cytoplasm"/>
    <property type="evidence" value="ECO:0007669"/>
    <property type="project" value="UniProtKB-SubCell"/>
</dbReference>
<dbReference type="GO" id="GO:0004814">
    <property type="term" value="F:arginine-tRNA ligase activity"/>
    <property type="evidence" value="ECO:0007669"/>
    <property type="project" value="UniProtKB-UniRule"/>
</dbReference>
<dbReference type="GO" id="GO:0005524">
    <property type="term" value="F:ATP binding"/>
    <property type="evidence" value="ECO:0007669"/>
    <property type="project" value="UniProtKB-UniRule"/>
</dbReference>
<dbReference type="GO" id="GO:0006420">
    <property type="term" value="P:arginyl-tRNA aminoacylation"/>
    <property type="evidence" value="ECO:0007669"/>
    <property type="project" value="UniProtKB-UniRule"/>
</dbReference>
<dbReference type="CDD" id="cd07956">
    <property type="entry name" value="Anticodon_Ia_Arg"/>
    <property type="match status" value="1"/>
</dbReference>
<dbReference type="CDD" id="cd00671">
    <property type="entry name" value="ArgRS_core"/>
    <property type="match status" value="1"/>
</dbReference>
<dbReference type="FunFam" id="1.10.730.10:FF:000008">
    <property type="entry name" value="Arginine--tRNA ligase"/>
    <property type="match status" value="1"/>
</dbReference>
<dbReference type="FunFam" id="3.30.1360.70:FF:000003">
    <property type="entry name" value="Arginine--tRNA ligase"/>
    <property type="match status" value="1"/>
</dbReference>
<dbReference type="FunFam" id="3.40.50.620:FF:000062">
    <property type="entry name" value="Arginine--tRNA ligase"/>
    <property type="match status" value="1"/>
</dbReference>
<dbReference type="Gene3D" id="3.30.1360.70">
    <property type="entry name" value="Arginyl tRNA synthetase N-terminal domain"/>
    <property type="match status" value="1"/>
</dbReference>
<dbReference type="Gene3D" id="3.40.50.620">
    <property type="entry name" value="HUPs"/>
    <property type="match status" value="1"/>
</dbReference>
<dbReference type="Gene3D" id="1.10.730.10">
    <property type="entry name" value="Isoleucyl-tRNA Synthetase, Domain 1"/>
    <property type="match status" value="1"/>
</dbReference>
<dbReference type="HAMAP" id="MF_00123">
    <property type="entry name" value="Arg_tRNA_synth"/>
    <property type="match status" value="1"/>
</dbReference>
<dbReference type="InterPro" id="IPR001412">
    <property type="entry name" value="aa-tRNA-synth_I_CS"/>
</dbReference>
<dbReference type="InterPro" id="IPR001278">
    <property type="entry name" value="Arg-tRNA-ligase"/>
</dbReference>
<dbReference type="InterPro" id="IPR005148">
    <property type="entry name" value="Arg-tRNA-synth_N"/>
</dbReference>
<dbReference type="InterPro" id="IPR036695">
    <property type="entry name" value="Arg-tRNA-synth_N_sf"/>
</dbReference>
<dbReference type="InterPro" id="IPR035684">
    <property type="entry name" value="ArgRS_core"/>
</dbReference>
<dbReference type="InterPro" id="IPR008909">
    <property type="entry name" value="DALR_anticod-bd"/>
</dbReference>
<dbReference type="InterPro" id="IPR014729">
    <property type="entry name" value="Rossmann-like_a/b/a_fold"/>
</dbReference>
<dbReference type="InterPro" id="IPR009080">
    <property type="entry name" value="tRNAsynth_Ia_anticodon-bd"/>
</dbReference>
<dbReference type="NCBIfam" id="TIGR00456">
    <property type="entry name" value="argS"/>
    <property type="match status" value="1"/>
</dbReference>
<dbReference type="PANTHER" id="PTHR11956:SF5">
    <property type="entry name" value="ARGININE--TRNA LIGASE, CYTOPLASMIC"/>
    <property type="match status" value="1"/>
</dbReference>
<dbReference type="PANTHER" id="PTHR11956">
    <property type="entry name" value="ARGINYL-TRNA SYNTHETASE"/>
    <property type="match status" value="1"/>
</dbReference>
<dbReference type="Pfam" id="PF03485">
    <property type="entry name" value="Arg_tRNA_synt_N"/>
    <property type="match status" value="1"/>
</dbReference>
<dbReference type="Pfam" id="PF05746">
    <property type="entry name" value="DALR_1"/>
    <property type="match status" value="1"/>
</dbReference>
<dbReference type="Pfam" id="PF00750">
    <property type="entry name" value="tRNA-synt_1d"/>
    <property type="match status" value="1"/>
</dbReference>
<dbReference type="PRINTS" id="PR01038">
    <property type="entry name" value="TRNASYNTHARG"/>
</dbReference>
<dbReference type="SMART" id="SM01016">
    <property type="entry name" value="Arg_tRNA_synt_N"/>
    <property type="match status" value="1"/>
</dbReference>
<dbReference type="SMART" id="SM00836">
    <property type="entry name" value="DALR_1"/>
    <property type="match status" value="1"/>
</dbReference>
<dbReference type="SUPFAM" id="SSF47323">
    <property type="entry name" value="Anticodon-binding domain of a subclass of class I aminoacyl-tRNA synthetases"/>
    <property type="match status" value="1"/>
</dbReference>
<dbReference type="SUPFAM" id="SSF55190">
    <property type="entry name" value="Arginyl-tRNA synthetase (ArgRS), N-terminal 'additional' domain"/>
    <property type="match status" value="1"/>
</dbReference>
<dbReference type="SUPFAM" id="SSF52374">
    <property type="entry name" value="Nucleotidylyl transferase"/>
    <property type="match status" value="1"/>
</dbReference>
<dbReference type="PROSITE" id="PS00178">
    <property type="entry name" value="AA_TRNA_LIGASE_I"/>
    <property type="match status" value="1"/>
</dbReference>